<comment type="function">
    <text>Catalyzes the GTP-dependent ribosomal translocation step during translation elongation. During this step, the ribosome changes from the pre-translocational (PRE) to the post-translocational (POST) state as the newly formed A-site-bound peptidyl-tRNA and P-site-bound deacylated tRNA move to the P and E sites, respectively. Catalyzes the coordinated movement of the two tRNA molecules, the mRNA and conformational changes in the ribosome.</text>
</comment>
<comment type="subunit">
    <text>Has vitronectin-binding activity.</text>
</comment>
<comment type="subcellular location">
    <subcellularLocation>
        <location>Cytoplasm</location>
    </subcellularLocation>
</comment>
<comment type="similarity">
    <text evidence="3">Belongs to the TRAFAC class translation factor GTPase superfamily. Classic translation factor GTPase family. EF-G/EF-2 subfamily.</text>
</comment>
<name>EFG_STAAU</name>
<accession>P68790</accession>
<accession>P81683</accession>
<accession>Q9X7M3</accession>
<proteinExistence type="evidence at protein level"/>
<evidence type="ECO:0000250" key="1"/>
<evidence type="ECO:0000269" key="2">
    <source ref="2"/>
</evidence>
<evidence type="ECO:0000305" key="3"/>
<evidence type="ECO:0007829" key="4">
    <source>
        <dbReference type="PDB" id="2XEX"/>
    </source>
</evidence>
<evidence type="ECO:0007829" key="5">
    <source>
        <dbReference type="PDB" id="3ZZ0"/>
    </source>
</evidence>
<organism>
    <name type="scientific">Staphylococcus aureus</name>
    <dbReference type="NCBI Taxonomy" id="1280"/>
    <lineage>
        <taxon>Bacteria</taxon>
        <taxon>Bacillati</taxon>
        <taxon>Bacillota</taxon>
        <taxon>Bacilli</taxon>
        <taxon>Bacillales</taxon>
        <taxon>Staphylococcaceae</taxon>
        <taxon>Staphylococcus</taxon>
    </lineage>
</organism>
<reference key="1">
    <citation type="journal article" date="2001" name="Mol. Microbiol.">
        <title>Biological cost and compensatory evolution in fusidic acid-resistant Staphylococcus aureus.</title>
        <authorList>
            <person name="Nagaev I."/>
            <person name="Bjorkman J."/>
            <person name="Andersson J."/>
            <person name="Hughes D."/>
        </authorList>
    </citation>
    <scope>NUCLEOTIDE SEQUENCE [GENOMIC DNA]</scope>
</reference>
<reference key="2">
    <citation type="submission" date="1999-02" db="UniProtKB">
        <title>A 85 kDa vitronectin binding protein of Staphylococcus aureus Cowan 1.</title>
        <authorList>
            <person name="Hussain M.S."/>
            <person name="Herrmann M."/>
            <person name="Chhatwal G.S."/>
            <person name="Peters G."/>
        </authorList>
    </citation>
    <scope>PROTEIN SEQUENCE OF 2-26</scope>
    <source>
        <strain>ATCC 12598 / Cowan 1 / DSM 20372 / NCIMB 11787 / NCTC 8530</strain>
    </source>
</reference>
<sequence length="693" mass="76612">MAREFSLEKTRNIGIMAHIDAGKTTTTERILYYTGRIHKIGETHEGASQMDWMEQEQDRGITITSAATTAAWEGHRVNIIDTPGHVDFTVEVERSLRVLDGAVTVLDAQSGVEPQTETVWRQATTYGVPRIVFVNKMDKLGANFEYSVSTLHDRLQANAAPIQLPIGAEDEFEAIIDLVEMKCFKYTNDLGTEIEEIEIPEDHLDRAEEARASLIEAVAETSDELMEKYLGDEEISVSELKEAIRQATTNVEFYPVLCGTAFKNKGVQLMLDAVIDYLPSPLDVKPIIGHRASNPEEEVIAKADDSAEFAALAFKVMTDPYVGKLTFFRVYSGTMTSGSYVKNSTKGKRERVGRLLQMHANSRQEIDTVYSGDIAAAVGLKDTGTGDTLCGEKNDIILESMEFPEPVIHLSVEPKSKADQDKMTQALVKLQEEDPTFHAHTDEETGQVIIGGMGELHLDILVDRMKKEFNVECNVGAPMVSYRETFKSSAQVQGKFSRQSGGRGQYGDVHIEFTPNETGAGFEFENAIVGGVVPREYIPSVEAGLKDAMENGVLAGYPLIDVKAKLYDGSYHDVDSSEMAFKIAASLALKEAAKKCDPVILEPMMKVTIEMPEEYMGDIMGDVTSRRGRVDGMEPRGNAQVVNAYVPLSEMFGYATSLRSNTQGRGTYTMYFDHYAEVPKSIAEDIIKKNKGE</sequence>
<keyword id="KW-0002">3D-structure</keyword>
<keyword id="KW-0963">Cytoplasm</keyword>
<keyword id="KW-0903">Direct protein sequencing</keyword>
<keyword id="KW-0251">Elongation factor</keyword>
<keyword id="KW-0342">GTP-binding</keyword>
<keyword id="KW-0547">Nucleotide-binding</keyword>
<keyword id="KW-0648">Protein biosynthesis</keyword>
<dbReference type="EMBL" id="AJ237696">
    <property type="protein sequence ID" value="CAB40191.1"/>
    <property type="molecule type" value="Genomic_DNA"/>
</dbReference>
<dbReference type="RefSeq" id="WP_000090315.1">
    <property type="nucleotide sequence ID" value="NZ_WYDB01000005.1"/>
</dbReference>
<dbReference type="PDB" id="2XEX">
    <property type="method" value="X-ray"/>
    <property type="resolution" value="1.90 A"/>
    <property type="chains" value="A/B=1-693"/>
</dbReference>
<dbReference type="PDB" id="3ZZ0">
    <property type="method" value="X-ray"/>
    <property type="resolution" value="2.80 A"/>
    <property type="chains" value="A/B=1-693"/>
</dbReference>
<dbReference type="PDB" id="3ZZT">
    <property type="method" value="X-ray"/>
    <property type="resolution" value="2.95 A"/>
    <property type="chains" value="A/B=1-693"/>
</dbReference>
<dbReference type="PDB" id="3ZZU">
    <property type="method" value="X-ray"/>
    <property type="resolution" value="2.98 A"/>
    <property type="chains" value="A/B=1-693"/>
</dbReference>
<dbReference type="PDBsum" id="2XEX"/>
<dbReference type="PDBsum" id="3ZZ0"/>
<dbReference type="PDBsum" id="3ZZT"/>
<dbReference type="PDBsum" id="3ZZU"/>
<dbReference type="SMR" id="P68790"/>
<dbReference type="ChEMBL" id="CHEMBL4665583"/>
<dbReference type="OMA" id="GQFAKVQ"/>
<dbReference type="EvolutionaryTrace" id="P68790"/>
<dbReference type="GO" id="GO:0005737">
    <property type="term" value="C:cytoplasm"/>
    <property type="evidence" value="ECO:0007669"/>
    <property type="project" value="UniProtKB-SubCell"/>
</dbReference>
<dbReference type="GO" id="GO:0005525">
    <property type="term" value="F:GTP binding"/>
    <property type="evidence" value="ECO:0007669"/>
    <property type="project" value="UniProtKB-UniRule"/>
</dbReference>
<dbReference type="GO" id="GO:0003924">
    <property type="term" value="F:GTPase activity"/>
    <property type="evidence" value="ECO:0007669"/>
    <property type="project" value="InterPro"/>
</dbReference>
<dbReference type="GO" id="GO:0003746">
    <property type="term" value="F:translation elongation factor activity"/>
    <property type="evidence" value="ECO:0007669"/>
    <property type="project" value="UniProtKB-UniRule"/>
</dbReference>
<dbReference type="GO" id="GO:0032790">
    <property type="term" value="P:ribosome disassembly"/>
    <property type="evidence" value="ECO:0007669"/>
    <property type="project" value="TreeGrafter"/>
</dbReference>
<dbReference type="CDD" id="cd01886">
    <property type="entry name" value="EF-G"/>
    <property type="match status" value="1"/>
</dbReference>
<dbReference type="CDD" id="cd16262">
    <property type="entry name" value="EFG_III"/>
    <property type="match status" value="1"/>
</dbReference>
<dbReference type="CDD" id="cd01434">
    <property type="entry name" value="EFG_mtEFG1_IV"/>
    <property type="match status" value="1"/>
</dbReference>
<dbReference type="CDD" id="cd03713">
    <property type="entry name" value="EFG_mtEFG_C"/>
    <property type="match status" value="1"/>
</dbReference>
<dbReference type="CDD" id="cd04088">
    <property type="entry name" value="EFG_mtEFG_II"/>
    <property type="match status" value="1"/>
</dbReference>
<dbReference type="FunFam" id="2.40.30.10:FF:000006">
    <property type="entry name" value="Elongation factor G"/>
    <property type="match status" value="1"/>
</dbReference>
<dbReference type="FunFam" id="3.30.230.10:FF:000003">
    <property type="entry name" value="Elongation factor G"/>
    <property type="match status" value="1"/>
</dbReference>
<dbReference type="FunFam" id="3.30.70.240:FF:000001">
    <property type="entry name" value="Elongation factor G"/>
    <property type="match status" value="1"/>
</dbReference>
<dbReference type="FunFam" id="3.30.70.870:FF:000001">
    <property type="entry name" value="Elongation factor G"/>
    <property type="match status" value="1"/>
</dbReference>
<dbReference type="FunFam" id="3.40.50.300:FF:000029">
    <property type="entry name" value="Elongation factor G"/>
    <property type="match status" value="1"/>
</dbReference>
<dbReference type="Gene3D" id="3.30.230.10">
    <property type="match status" value="1"/>
</dbReference>
<dbReference type="Gene3D" id="3.30.70.240">
    <property type="match status" value="1"/>
</dbReference>
<dbReference type="Gene3D" id="3.30.70.870">
    <property type="entry name" value="Elongation Factor G (Translational Gtpase), domain 3"/>
    <property type="match status" value="1"/>
</dbReference>
<dbReference type="Gene3D" id="3.40.50.300">
    <property type="entry name" value="P-loop containing nucleotide triphosphate hydrolases"/>
    <property type="match status" value="1"/>
</dbReference>
<dbReference type="Gene3D" id="2.40.30.10">
    <property type="entry name" value="Translation factors"/>
    <property type="match status" value="1"/>
</dbReference>
<dbReference type="HAMAP" id="MF_00054_B">
    <property type="entry name" value="EF_G_EF_2_B"/>
    <property type="match status" value="1"/>
</dbReference>
<dbReference type="InterPro" id="IPR041095">
    <property type="entry name" value="EFG_II"/>
</dbReference>
<dbReference type="InterPro" id="IPR009022">
    <property type="entry name" value="EFG_III"/>
</dbReference>
<dbReference type="InterPro" id="IPR035647">
    <property type="entry name" value="EFG_III/V"/>
</dbReference>
<dbReference type="InterPro" id="IPR047872">
    <property type="entry name" value="EFG_IV"/>
</dbReference>
<dbReference type="InterPro" id="IPR035649">
    <property type="entry name" value="EFG_V"/>
</dbReference>
<dbReference type="InterPro" id="IPR000640">
    <property type="entry name" value="EFG_V-like"/>
</dbReference>
<dbReference type="InterPro" id="IPR004161">
    <property type="entry name" value="EFTu-like_2"/>
</dbReference>
<dbReference type="InterPro" id="IPR031157">
    <property type="entry name" value="G_TR_CS"/>
</dbReference>
<dbReference type="InterPro" id="IPR027417">
    <property type="entry name" value="P-loop_NTPase"/>
</dbReference>
<dbReference type="InterPro" id="IPR020568">
    <property type="entry name" value="Ribosomal_Su5_D2-typ_SF"/>
</dbReference>
<dbReference type="InterPro" id="IPR014721">
    <property type="entry name" value="Ribsml_uS5_D2-typ_fold_subgr"/>
</dbReference>
<dbReference type="InterPro" id="IPR005225">
    <property type="entry name" value="Small_GTP-bd"/>
</dbReference>
<dbReference type="InterPro" id="IPR000795">
    <property type="entry name" value="T_Tr_GTP-bd_dom"/>
</dbReference>
<dbReference type="InterPro" id="IPR009000">
    <property type="entry name" value="Transl_B-barrel_sf"/>
</dbReference>
<dbReference type="InterPro" id="IPR004540">
    <property type="entry name" value="Transl_elong_EFG/EF2"/>
</dbReference>
<dbReference type="InterPro" id="IPR005517">
    <property type="entry name" value="Transl_elong_EFG/EF2_IV"/>
</dbReference>
<dbReference type="NCBIfam" id="TIGR00484">
    <property type="entry name" value="EF-G"/>
    <property type="match status" value="1"/>
</dbReference>
<dbReference type="NCBIfam" id="NF009379">
    <property type="entry name" value="PRK12740.1-3"/>
    <property type="match status" value="1"/>
</dbReference>
<dbReference type="NCBIfam" id="NF009381">
    <property type="entry name" value="PRK12740.1-5"/>
    <property type="match status" value="1"/>
</dbReference>
<dbReference type="NCBIfam" id="TIGR00231">
    <property type="entry name" value="small_GTP"/>
    <property type="match status" value="1"/>
</dbReference>
<dbReference type="PANTHER" id="PTHR43261:SF1">
    <property type="entry name" value="RIBOSOME-RELEASING FACTOR 2, MITOCHONDRIAL"/>
    <property type="match status" value="1"/>
</dbReference>
<dbReference type="PANTHER" id="PTHR43261">
    <property type="entry name" value="TRANSLATION ELONGATION FACTOR G-RELATED"/>
    <property type="match status" value="1"/>
</dbReference>
<dbReference type="Pfam" id="PF00679">
    <property type="entry name" value="EFG_C"/>
    <property type="match status" value="1"/>
</dbReference>
<dbReference type="Pfam" id="PF14492">
    <property type="entry name" value="EFG_III"/>
    <property type="match status" value="1"/>
</dbReference>
<dbReference type="Pfam" id="PF03764">
    <property type="entry name" value="EFG_IV"/>
    <property type="match status" value="1"/>
</dbReference>
<dbReference type="Pfam" id="PF00009">
    <property type="entry name" value="GTP_EFTU"/>
    <property type="match status" value="1"/>
</dbReference>
<dbReference type="Pfam" id="PF03144">
    <property type="entry name" value="GTP_EFTU_D2"/>
    <property type="match status" value="1"/>
</dbReference>
<dbReference type="PRINTS" id="PR00315">
    <property type="entry name" value="ELONGATNFCT"/>
</dbReference>
<dbReference type="SMART" id="SM00838">
    <property type="entry name" value="EFG_C"/>
    <property type="match status" value="1"/>
</dbReference>
<dbReference type="SMART" id="SM00889">
    <property type="entry name" value="EFG_IV"/>
    <property type="match status" value="1"/>
</dbReference>
<dbReference type="SUPFAM" id="SSF54980">
    <property type="entry name" value="EF-G C-terminal domain-like"/>
    <property type="match status" value="2"/>
</dbReference>
<dbReference type="SUPFAM" id="SSF52540">
    <property type="entry name" value="P-loop containing nucleoside triphosphate hydrolases"/>
    <property type="match status" value="1"/>
</dbReference>
<dbReference type="SUPFAM" id="SSF54211">
    <property type="entry name" value="Ribosomal protein S5 domain 2-like"/>
    <property type="match status" value="1"/>
</dbReference>
<dbReference type="SUPFAM" id="SSF50447">
    <property type="entry name" value="Translation proteins"/>
    <property type="match status" value="1"/>
</dbReference>
<dbReference type="PROSITE" id="PS00301">
    <property type="entry name" value="G_TR_1"/>
    <property type="match status" value="1"/>
</dbReference>
<dbReference type="PROSITE" id="PS51722">
    <property type="entry name" value="G_TR_2"/>
    <property type="match status" value="1"/>
</dbReference>
<protein>
    <recommendedName>
        <fullName>Elongation factor G</fullName>
        <shortName>EF-G</shortName>
    </recommendedName>
    <alternativeName>
        <fullName>85 kDa vitronectin-binding protein</fullName>
    </alternativeName>
</protein>
<feature type="initiator methionine" description="Removed" evidence="2">
    <location>
        <position position="1"/>
    </location>
</feature>
<feature type="chain" id="PRO_0000091219" description="Elongation factor G">
    <location>
        <begin position="2"/>
        <end position="693"/>
    </location>
</feature>
<feature type="domain" description="tr-type G">
    <location>
        <begin position="8"/>
        <end position="282"/>
    </location>
</feature>
<feature type="binding site" evidence="1">
    <location>
        <begin position="17"/>
        <end position="24"/>
    </location>
    <ligand>
        <name>GTP</name>
        <dbReference type="ChEBI" id="CHEBI:37565"/>
    </ligand>
</feature>
<feature type="binding site" evidence="1">
    <location>
        <begin position="81"/>
        <end position="85"/>
    </location>
    <ligand>
        <name>GTP</name>
        <dbReference type="ChEBI" id="CHEBI:37565"/>
    </ligand>
</feature>
<feature type="binding site" evidence="1">
    <location>
        <begin position="135"/>
        <end position="138"/>
    </location>
    <ligand>
        <name>GTP</name>
        <dbReference type="ChEBI" id="CHEBI:37565"/>
    </ligand>
</feature>
<feature type="sequence conflict" description="In Ref. 2; AA sequence." evidence="3" ref="2">
    <original>E</original>
    <variation>Q</variation>
    <location>
        <position position="4"/>
    </location>
</feature>
<feature type="sequence conflict" description="In Ref. 2; AA sequence." evidence="3" ref="2">
    <original>E</original>
    <variation>Q</variation>
    <location>
        <position position="8"/>
    </location>
</feature>
<feature type="sequence conflict" description="In Ref. 2; AA sequence." evidence="3" ref="2">
    <location>
        <position position="19"/>
    </location>
</feature>
<feature type="sequence conflict" description="In Ref. 2; AA sequence." evidence="3" ref="2">
    <original>T</original>
    <variation>L</variation>
    <location>
        <position position="25"/>
    </location>
</feature>
<feature type="helix" evidence="5">
    <location>
        <begin position="7"/>
        <end position="9"/>
    </location>
</feature>
<feature type="strand" evidence="4">
    <location>
        <begin position="10"/>
        <end position="16"/>
    </location>
</feature>
<feature type="helix" evidence="4">
    <location>
        <begin position="19"/>
        <end position="21"/>
    </location>
</feature>
<feature type="helix" evidence="4">
    <location>
        <begin position="23"/>
        <end position="34"/>
    </location>
</feature>
<feature type="helix" evidence="4">
    <location>
        <begin position="47"/>
        <end position="50"/>
    </location>
</feature>
<feature type="turn" evidence="4">
    <location>
        <begin position="51"/>
        <end position="53"/>
    </location>
</feature>
<feature type="strand" evidence="4">
    <location>
        <begin position="66"/>
        <end position="72"/>
    </location>
</feature>
<feature type="strand" evidence="4">
    <location>
        <begin position="75"/>
        <end position="80"/>
    </location>
</feature>
<feature type="helix" evidence="4">
    <location>
        <begin position="90"/>
        <end position="98"/>
    </location>
</feature>
<feature type="strand" evidence="4">
    <location>
        <begin position="100"/>
        <end position="107"/>
    </location>
</feature>
<feature type="turn" evidence="4">
    <location>
        <begin position="108"/>
        <end position="110"/>
    </location>
</feature>
<feature type="helix" evidence="4">
    <location>
        <begin position="114"/>
        <end position="125"/>
    </location>
</feature>
<feature type="strand" evidence="4">
    <location>
        <begin position="130"/>
        <end position="135"/>
    </location>
</feature>
<feature type="helix" evidence="4">
    <location>
        <begin position="144"/>
        <end position="155"/>
    </location>
</feature>
<feature type="strand" evidence="4">
    <location>
        <begin position="159"/>
        <end position="166"/>
    </location>
</feature>
<feature type="helix" evidence="4">
    <location>
        <begin position="169"/>
        <end position="171"/>
    </location>
</feature>
<feature type="strand" evidence="4">
    <location>
        <begin position="174"/>
        <end position="177"/>
    </location>
</feature>
<feature type="turn" evidence="4">
    <location>
        <begin position="178"/>
        <end position="181"/>
    </location>
</feature>
<feature type="strand" evidence="4">
    <location>
        <begin position="182"/>
        <end position="185"/>
    </location>
</feature>
<feature type="strand" evidence="4">
    <location>
        <begin position="188"/>
        <end position="191"/>
    </location>
</feature>
<feature type="strand" evidence="4">
    <location>
        <begin position="195"/>
        <end position="197"/>
    </location>
</feature>
<feature type="helix" evidence="4">
    <location>
        <begin position="201"/>
        <end position="203"/>
    </location>
</feature>
<feature type="helix" evidence="4">
    <location>
        <begin position="204"/>
        <end position="219"/>
    </location>
</feature>
<feature type="helix" evidence="4">
    <location>
        <begin position="223"/>
        <end position="230"/>
    </location>
</feature>
<feature type="helix" evidence="4">
    <location>
        <begin position="237"/>
        <end position="249"/>
    </location>
</feature>
<feature type="strand" evidence="4">
    <location>
        <begin position="254"/>
        <end position="258"/>
    </location>
</feature>
<feature type="turn" evidence="4">
    <location>
        <begin position="261"/>
        <end position="264"/>
    </location>
</feature>
<feature type="helix" evidence="4">
    <location>
        <begin position="267"/>
        <end position="277"/>
    </location>
</feature>
<feature type="helix" evidence="4">
    <location>
        <begin position="281"/>
        <end position="283"/>
    </location>
</feature>
<feature type="strand" evidence="4">
    <location>
        <begin position="287"/>
        <end position="291"/>
    </location>
</feature>
<feature type="strand" evidence="4">
    <location>
        <begin position="294"/>
        <end position="301"/>
    </location>
</feature>
<feature type="strand" evidence="5">
    <location>
        <begin position="305"/>
        <end position="307"/>
    </location>
</feature>
<feature type="strand" evidence="4">
    <location>
        <begin position="310"/>
        <end position="319"/>
    </location>
</feature>
<feature type="turn" evidence="4">
    <location>
        <begin position="320"/>
        <end position="322"/>
    </location>
</feature>
<feature type="strand" evidence="4">
    <location>
        <begin position="323"/>
        <end position="336"/>
    </location>
</feature>
<feature type="strand" evidence="4">
    <location>
        <begin position="339"/>
        <end position="343"/>
    </location>
</feature>
<feature type="turn" evidence="4">
    <location>
        <begin position="344"/>
        <end position="347"/>
    </location>
</feature>
<feature type="strand" evidence="4">
    <location>
        <begin position="348"/>
        <end position="352"/>
    </location>
</feature>
<feature type="strand" evidence="4">
    <location>
        <begin position="355"/>
        <end position="358"/>
    </location>
</feature>
<feature type="strand" evidence="4">
    <location>
        <begin position="363"/>
        <end position="365"/>
    </location>
</feature>
<feature type="strand" evidence="4">
    <location>
        <begin position="367"/>
        <end position="370"/>
    </location>
</feature>
<feature type="strand" evidence="4">
    <location>
        <begin position="374"/>
        <end position="379"/>
    </location>
</feature>
<feature type="strand" evidence="4">
    <location>
        <begin position="388"/>
        <end position="391"/>
    </location>
</feature>
<feature type="strand" evidence="4">
    <location>
        <begin position="407"/>
        <end position="416"/>
    </location>
</feature>
<feature type="helix" evidence="4">
    <location>
        <begin position="417"/>
        <end position="433"/>
    </location>
</feature>
<feature type="strand" evidence="4">
    <location>
        <begin position="438"/>
        <end position="440"/>
    </location>
</feature>
<feature type="strand" evidence="4">
    <location>
        <begin position="448"/>
        <end position="454"/>
    </location>
</feature>
<feature type="helix" evidence="4">
    <location>
        <begin position="455"/>
        <end position="468"/>
    </location>
</feature>
<feature type="strand" evidence="4">
    <location>
        <begin position="473"/>
        <end position="475"/>
    </location>
</feature>
<feature type="strand" evidence="4">
    <location>
        <begin position="483"/>
        <end position="488"/>
    </location>
</feature>
<feature type="strand" evidence="4">
    <location>
        <begin position="490"/>
        <end position="498"/>
    </location>
</feature>
<feature type="strand" evidence="4">
    <location>
        <begin position="505"/>
        <end position="515"/>
    </location>
</feature>
<feature type="strand" evidence="4">
    <location>
        <begin position="523"/>
        <end position="526"/>
    </location>
</feature>
<feature type="strand" evidence="5">
    <location>
        <begin position="530"/>
        <end position="533"/>
    </location>
</feature>
<feature type="helix" evidence="4">
    <location>
        <begin position="535"/>
        <end position="537"/>
    </location>
</feature>
<feature type="helix" evidence="4">
    <location>
        <begin position="538"/>
        <end position="550"/>
    </location>
</feature>
<feature type="strand" evidence="4">
    <location>
        <begin position="553"/>
        <end position="556"/>
    </location>
</feature>
<feature type="strand" evidence="4">
    <location>
        <begin position="561"/>
        <end position="570"/>
    </location>
</feature>
<feature type="turn" evidence="4">
    <location>
        <begin position="573"/>
        <end position="575"/>
    </location>
</feature>
<feature type="helix" evidence="4">
    <location>
        <begin position="578"/>
        <end position="593"/>
    </location>
</feature>
<feature type="strand" evidence="4">
    <location>
        <begin position="598"/>
        <end position="612"/>
    </location>
</feature>
<feature type="helix" evidence="4">
    <location>
        <begin position="613"/>
        <end position="615"/>
    </location>
</feature>
<feature type="helix" evidence="4">
    <location>
        <begin position="616"/>
        <end position="625"/>
    </location>
</feature>
<feature type="strand" evidence="4">
    <location>
        <begin position="629"/>
        <end position="636"/>
    </location>
</feature>
<feature type="strand" evidence="4">
    <location>
        <begin position="639"/>
        <end position="647"/>
    </location>
</feature>
<feature type="helix" evidence="4">
    <location>
        <begin position="648"/>
        <end position="650"/>
    </location>
</feature>
<feature type="helix" evidence="4">
    <location>
        <begin position="654"/>
        <end position="661"/>
    </location>
</feature>
<feature type="turn" evidence="4">
    <location>
        <begin position="662"/>
        <end position="664"/>
    </location>
</feature>
<feature type="strand" evidence="4">
    <location>
        <begin position="667"/>
        <end position="677"/>
    </location>
</feature>
<feature type="helix" evidence="4">
    <location>
        <begin position="680"/>
        <end position="690"/>
    </location>
</feature>
<gene>
    <name type="primary">fusA</name>
    <name type="synonym">fus</name>
</gene>